<dbReference type="EMBL" id="AE017321">
    <property type="protein sequence ID" value="AAW71207.1"/>
    <property type="molecule type" value="Genomic_DNA"/>
</dbReference>
<dbReference type="RefSeq" id="WP_011256817.1">
    <property type="nucleotide sequence ID" value="NC_006833.1"/>
</dbReference>
<dbReference type="SMR" id="Q5GS17"/>
<dbReference type="STRING" id="292805.Wbm0619"/>
<dbReference type="KEGG" id="wbm:Wbm0619"/>
<dbReference type="eggNOG" id="COG2332">
    <property type="taxonomic scope" value="Bacteria"/>
</dbReference>
<dbReference type="HOGENOM" id="CLU_079503_1_1_5"/>
<dbReference type="Proteomes" id="UP000000534">
    <property type="component" value="Chromosome"/>
</dbReference>
<dbReference type="GO" id="GO:0005886">
    <property type="term" value="C:plasma membrane"/>
    <property type="evidence" value="ECO:0007669"/>
    <property type="project" value="UniProtKB-SubCell"/>
</dbReference>
<dbReference type="GO" id="GO:0020037">
    <property type="term" value="F:heme binding"/>
    <property type="evidence" value="ECO:0007669"/>
    <property type="project" value="InterPro"/>
</dbReference>
<dbReference type="GO" id="GO:0046872">
    <property type="term" value="F:metal ion binding"/>
    <property type="evidence" value="ECO:0007669"/>
    <property type="project" value="UniProtKB-KW"/>
</dbReference>
<dbReference type="GO" id="GO:0017004">
    <property type="term" value="P:cytochrome complex assembly"/>
    <property type="evidence" value="ECO:0007669"/>
    <property type="project" value="UniProtKB-KW"/>
</dbReference>
<dbReference type="Gene3D" id="2.40.50.140">
    <property type="entry name" value="Nucleic acid-binding proteins"/>
    <property type="match status" value="1"/>
</dbReference>
<dbReference type="HAMAP" id="MF_01959">
    <property type="entry name" value="CcmE"/>
    <property type="match status" value="1"/>
</dbReference>
<dbReference type="InterPro" id="IPR004329">
    <property type="entry name" value="CcmE"/>
</dbReference>
<dbReference type="InterPro" id="IPR036127">
    <property type="entry name" value="CcmE-like_sf"/>
</dbReference>
<dbReference type="InterPro" id="IPR012340">
    <property type="entry name" value="NA-bd_OB-fold"/>
</dbReference>
<dbReference type="NCBIfam" id="NF009727">
    <property type="entry name" value="PRK13254.1-1"/>
    <property type="match status" value="1"/>
</dbReference>
<dbReference type="PANTHER" id="PTHR34128">
    <property type="entry name" value="CYTOCHROME C-TYPE BIOGENESIS PROTEIN CCME HOMOLOG, MITOCHONDRIAL"/>
    <property type="match status" value="1"/>
</dbReference>
<dbReference type="PANTHER" id="PTHR34128:SF2">
    <property type="entry name" value="CYTOCHROME C-TYPE BIOGENESIS PROTEIN CCME HOMOLOG, MITOCHONDRIAL"/>
    <property type="match status" value="1"/>
</dbReference>
<dbReference type="Pfam" id="PF03100">
    <property type="entry name" value="CcmE"/>
    <property type="match status" value="1"/>
</dbReference>
<dbReference type="SUPFAM" id="SSF82093">
    <property type="entry name" value="Heme chaperone CcmE"/>
    <property type="match status" value="1"/>
</dbReference>
<evidence type="ECO:0000255" key="1">
    <source>
        <dbReference type="HAMAP-Rule" id="MF_01959"/>
    </source>
</evidence>
<organism>
    <name type="scientific">Wolbachia sp. subsp. Brugia malayi (strain TRS)</name>
    <dbReference type="NCBI Taxonomy" id="292805"/>
    <lineage>
        <taxon>Bacteria</taxon>
        <taxon>Pseudomonadati</taxon>
        <taxon>Pseudomonadota</taxon>
        <taxon>Alphaproteobacteria</taxon>
        <taxon>Rickettsiales</taxon>
        <taxon>Anaplasmataceae</taxon>
        <taxon>Wolbachieae</taxon>
        <taxon>Wolbachia</taxon>
    </lineage>
</organism>
<protein>
    <recommendedName>
        <fullName evidence="1">Cytochrome c-type biogenesis protein CcmE</fullName>
    </recommendedName>
    <alternativeName>
        <fullName evidence="1">Cytochrome c maturation protein E</fullName>
    </alternativeName>
    <alternativeName>
        <fullName evidence="1">Heme chaperone CcmE</fullName>
    </alternativeName>
</protein>
<name>CCME_WOLTR</name>
<sequence length="128" mass="14682">MKKKHKRLLVASGIFFFLNCIVFFILTILRENISFFYTVSEAITLSNNQKPIRIGGMVVEDSVIRSESEVVFQMTDFNKSIVIKYQGILPPMFSEKSGVVVQGKMFDGNTFLAETVFAKHDENYMPRK</sequence>
<reference key="1">
    <citation type="journal article" date="2005" name="PLoS Biol.">
        <title>The Wolbachia genome of Brugia malayi: endosymbiont evolution within a human pathogenic nematode.</title>
        <authorList>
            <person name="Foster J."/>
            <person name="Ganatra M."/>
            <person name="Kamal I."/>
            <person name="Ware J."/>
            <person name="Makarova K."/>
            <person name="Ivanova N."/>
            <person name="Bhattacharyya A."/>
            <person name="Kapatral V."/>
            <person name="Kumar S."/>
            <person name="Posfai J."/>
            <person name="Vincze T."/>
            <person name="Ingram J."/>
            <person name="Moran L."/>
            <person name="Lapidus A."/>
            <person name="Omelchenko M."/>
            <person name="Kyrpides N."/>
            <person name="Ghedin E."/>
            <person name="Wang S."/>
            <person name="Goltsman E."/>
            <person name="Joukov V."/>
            <person name="Ostrovskaya O."/>
            <person name="Tsukerman K."/>
            <person name="Mazur M."/>
            <person name="Comb D."/>
            <person name="Koonin E."/>
            <person name="Slatko B."/>
        </authorList>
    </citation>
    <scope>NUCLEOTIDE SEQUENCE [LARGE SCALE GENOMIC DNA]</scope>
    <source>
        <strain>TRS</strain>
    </source>
</reference>
<keyword id="KW-1003">Cell membrane</keyword>
<keyword id="KW-0201">Cytochrome c-type biogenesis</keyword>
<keyword id="KW-0349">Heme</keyword>
<keyword id="KW-0408">Iron</keyword>
<keyword id="KW-0472">Membrane</keyword>
<keyword id="KW-0479">Metal-binding</keyword>
<keyword id="KW-1185">Reference proteome</keyword>
<keyword id="KW-0735">Signal-anchor</keyword>
<keyword id="KW-0812">Transmembrane</keyword>
<keyword id="KW-1133">Transmembrane helix</keyword>
<gene>
    <name evidence="1" type="primary">ccmE</name>
    <name evidence="1" type="synonym">cycJ</name>
    <name type="ordered locus">Wbm0619</name>
</gene>
<comment type="function">
    <text evidence="1">Heme chaperone required for the biogenesis of c-type cytochromes. Transiently binds heme delivered by CcmC and transfers the heme to apo-cytochromes in a process facilitated by CcmF and CcmH.</text>
</comment>
<comment type="subcellular location">
    <subcellularLocation>
        <location evidence="1">Cell membrane</location>
        <topology evidence="1">Single-pass type II membrane protein</topology>
    </subcellularLocation>
</comment>
<comment type="similarity">
    <text evidence="1">Belongs to the CcmE/CycJ family.</text>
</comment>
<proteinExistence type="inferred from homology"/>
<feature type="chain" id="PRO_0000238878" description="Cytochrome c-type biogenesis protein CcmE">
    <location>
        <begin position="1"/>
        <end position="128"/>
    </location>
</feature>
<feature type="topological domain" description="Cytoplasmic" evidence="1">
    <location>
        <begin position="1"/>
        <end position="7"/>
    </location>
</feature>
<feature type="transmembrane region" description="Helical; Signal-anchor for type II membrane protein" evidence="1">
    <location>
        <begin position="8"/>
        <end position="28"/>
    </location>
</feature>
<feature type="topological domain" description="Extracellular" evidence="1">
    <location>
        <begin position="29"/>
        <end position="128"/>
    </location>
</feature>
<feature type="binding site" description="covalent" evidence="1">
    <location>
        <position position="120"/>
    </location>
    <ligand>
        <name>heme</name>
        <dbReference type="ChEBI" id="CHEBI:30413"/>
    </ligand>
</feature>
<feature type="binding site" description="axial binding residue" evidence="1">
    <location>
        <position position="124"/>
    </location>
    <ligand>
        <name>heme</name>
        <dbReference type="ChEBI" id="CHEBI:30413"/>
    </ligand>
    <ligandPart>
        <name>Fe</name>
        <dbReference type="ChEBI" id="CHEBI:18248"/>
    </ligandPart>
</feature>
<accession>Q5GS17</accession>